<accession>Q3AW54</accession>
<organism>
    <name type="scientific">Synechococcus sp. (strain CC9902)</name>
    <dbReference type="NCBI Taxonomy" id="316279"/>
    <lineage>
        <taxon>Bacteria</taxon>
        <taxon>Bacillati</taxon>
        <taxon>Cyanobacteriota</taxon>
        <taxon>Cyanophyceae</taxon>
        <taxon>Synechococcales</taxon>
        <taxon>Synechococcaceae</taxon>
        <taxon>Synechococcus</taxon>
    </lineage>
</organism>
<feature type="chain" id="PRO_0000263522" description="Elongation factor G">
    <location>
        <begin position="1"/>
        <end position="691"/>
    </location>
</feature>
<feature type="domain" description="tr-type G">
    <location>
        <begin position="8"/>
        <end position="282"/>
    </location>
</feature>
<feature type="binding site" evidence="1">
    <location>
        <begin position="17"/>
        <end position="24"/>
    </location>
    <ligand>
        <name>GTP</name>
        <dbReference type="ChEBI" id="CHEBI:37565"/>
    </ligand>
</feature>
<feature type="binding site" evidence="1">
    <location>
        <begin position="81"/>
        <end position="85"/>
    </location>
    <ligand>
        <name>GTP</name>
        <dbReference type="ChEBI" id="CHEBI:37565"/>
    </ligand>
</feature>
<feature type="binding site" evidence="1">
    <location>
        <begin position="135"/>
        <end position="138"/>
    </location>
    <ligand>
        <name>GTP</name>
        <dbReference type="ChEBI" id="CHEBI:37565"/>
    </ligand>
</feature>
<name>EFG_SYNS9</name>
<comment type="function">
    <text evidence="1">Catalyzes the GTP-dependent ribosomal translocation step during translation elongation. During this step, the ribosome changes from the pre-translocational (PRE) to the post-translocational (POST) state as the newly formed A-site-bound peptidyl-tRNA and P-site-bound deacylated tRNA move to the P and E sites, respectively. Catalyzes the coordinated movement of the two tRNA molecules, the mRNA and conformational changes in the ribosome.</text>
</comment>
<comment type="subcellular location">
    <subcellularLocation>
        <location evidence="1">Cytoplasm</location>
    </subcellularLocation>
</comment>
<comment type="similarity">
    <text evidence="1">Belongs to the TRAFAC class translation factor GTPase superfamily. Classic translation factor GTPase family. EF-G/EF-2 subfamily.</text>
</comment>
<keyword id="KW-0963">Cytoplasm</keyword>
<keyword id="KW-0251">Elongation factor</keyword>
<keyword id="KW-0342">GTP-binding</keyword>
<keyword id="KW-0547">Nucleotide-binding</keyword>
<keyword id="KW-0648">Protein biosynthesis</keyword>
<keyword id="KW-1185">Reference proteome</keyword>
<evidence type="ECO:0000255" key="1">
    <source>
        <dbReference type="HAMAP-Rule" id="MF_00054"/>
    </source>
</evidence>
<dbReference type="EMBL" id="CP000097">
    <property type="protein sequence ID" value="ABB26979.1"/>
    <property type="molecule type" value="Genomic_DNA"/>
</dbReference>
<dbReference type="RefSeq" id="WP_011360769.1">
    <property type="nucleotide sequence ID" value="NC_007513.1"/>
</dbReference>
<dbReference type="SMR" id="Q3AW54"/>
<dbReference type="STRING" id="316279.Syncc9902_2021"/>
<dbReference type="KEGG" id="sye:Syncc9902_2021"/>
<dbReference type="eggNOG" id="COG0480">
    <property type="taxonomic scope" value="Bacteria"/>
</dbReference>
<dbReference type="HOGENOM" id="CLU_002794_4_1_3"/>
<dbReference type="OrthoDB" id="580826at2"/>
<dbReference type="Proteomes" id="UP000002712">
    <property type="component" value="Chromosome"/>
</dbReference>
<dbReference type="GO" id="GO:0005737">
    <property type="term" value="C:cytoplasm"/>
    <property type="evidence" value="ECO:0007669"/>
    <property type="project" value="UniProtKB-SubCell"/>
</dbReference>
<dbReference type="GO" id="GO:0005525">
    <property type="term" value="F:GTP binding"/>
    <property type="evidence" value="ECO:0007669"/>
    <property type="project" value="UniProtKB-UniRule"/>
</dbReference>
<dbReference type="GO" id="GO:0003924">
    <property type="term" value="F:GTPase activity"/>
    <property type="evidence" value="ECO:0007669"/>
    <property type="project" value="InterPro"/>
</dbReference>
<dbReference type="GO" id="GO:0003746">
    <property type="term" value="F:translation elongation factor activity"/>
    <property type="evidence" value="ECO:0007669"/>
    <property type="project" value="UniProtKB-UniRule"/>
</dbReference>
<dbReference type="GO" id="GO:0032790">
    <property type="term" value="P:ribosome disassembly"/>
    <property type="evidence" value="ECO:0007669"/>
    <property type="project" value="TreeGrafter"/>
</dbReference>
<dbReference type="CDD" id="cd01886">
    <property type="entry name" value="EF-G"/>
    <property type="match status" value="1"/>
</dbReference>
<dbReference type="CDD" id="cd16262">
    <property type="entry name" value="EFG_III"/>
    <property type="match status" value="1"/>
</dbReference>
<dbReference type="CDD" id="cd01434">
    <property type="entry name" value="EFG_mtEFG1_IV"/>
    <property type="match status" value="1"/>
</dbReference>
<dbReference type="CDD" id="cd03713">
    <property type="entry name" value="EFG_mtEFG_C"/>
    <property type="match status" value="1"/>
</dbReference>
<dbReference type="CDD" id="cd04088">
    <property type="entry name" value="EFG_mtEFG_II"/>
    <property type="match status" value="1"/>
</dbReference>
<dbReference type="FunFam" id="2.40.30.10:FF:000006">
    <property type="entry name" value="Elongation factor G"/>
    <property type="match status" value="1"/>
</dbReference>
<dbReference type="FunFam" id="3.30.230.10:FF:000003">
    <property type="entry name" value="Elongation factor G"/>
    <property type="match status" value="1"/>
</dbReference>
<dbReference type="FunFam" id="3.30.70.240:FF:000001">
    <property type="entry name" value="Elongation factor G"/>
    <property type="match status" value="1"/>
</dbReference>
<dbReference type="FunFam" id="3.30.70.870:FF:000001">
    <property type="entry name" value="Elongation factor G"/>
    <property type="match status" value="1"/>
</dbReference>
<dbReference type="FunFam" id="3.40.50.300:FF:000029">
    <property type="entry name" value="Elongation factor G"/>
    <property type="match status" value="1"/>
</dbReference>
<dbReference type="Gene3D" id="3.30.230.10">
    <property type="match status" value="1"/>
</dbReference>
<dbReference type="Gene3D" id="3.30.70.240">
    <property type="match status" value="1"/>
</dbReference>
<dbReference type="Gene3D" id="3.30.70.870">
    <property type="entry name" value="Elongation Factor G (Translational Gtpase), domain 3"/>
    <property type="match status" value="1"/>
</dbReference>
<dbReference type="Gene3D" id="3.40.50.300">
    <property type="entry name" value="P-loop containing nucleotide triphosphate hydrolases"/>
    <property type="match status" value="1"/>
</dbReference>
<dbReference type="Gene3D" id="2.40.30.10">
    <property type="entry name" value="Translation factors"/>
    <property type="match status" value="1"/>
</dbReference>
<dbReference type="HAMAP" id="MF_00054_B">
    <property type="entry name" value="EF_G_EF_2_B"/>
    <property type="match status" value="1"/>
</dbReference>
<dbReference type="InterPro" id="IPR041095">
    <property type="entry name" value="EFG_II"/>
</dbReference>
<dbReference type="InterPro" id="IPR009022">
    <property type="entry name" value="EFG_III"/>
</dbReference>
<dbReference type="InterPro" id="IPR035647">
    <property type="entry name" value="EFG_III/V"/>
</dbReference>
<dbReference type="InterPro" id="IPR047872">
    <property type="entry name" value="EFG_IV"/>
</dbReference>
<dbReference type="InterPro" id="IPR035649">
    <property type="entry name" value="EFG_V"/>
</dbReference>
<dbReference type="InterPro" id="IPR000640">
    <property type="entry name" value="EFG_V-like"/>
</dbReference>
<dbReference type="InterPro" id="IPR004161">
    <property type="entry name" value="EFTu-like_2"/>
</dbReference>
<dbReference type="InterPro" id="IPR031157">
    <property type="entry name" value="G_TR_CS"/>
</dbReference>
<dbReference type="InterPro" id="IPR027417">
    <property type="entry name" value="P-loop_NTPase"/>
</dbReference>
<dbReference type="InterPro" id="IPR020568">
    <property type="entry name" value="Ribosomal_Su5_D2-typ_SF"/>
</dbReference>
<dbReference type="InterPro" id="IPR014721">
    <property type="entry name" value="Ribsml_uS5_D2-typ_fold_subgr"/>
</dbReference>
<dbReference type="InterPro" id="IPR005225">
    <property type="entry name" value="Small_GTP-bd"/>
</dbReference>
<dbReference type="InterPro" id="IPR000795">
    <property type="entry name" value="T_Tr_GTP-bd_dom"/>
</dbReference>
<dbReference type="InterPro" id="IPR009000">
    <property type="entry name" value="Transl_B-barrel_sf"/>
</dbReference>
<dbReference type="InterPro" id="IPR004540">
    <property type="entry name" value="Transl_elong_EFG/EF2"/>
</dbReference>
<dbReference type="InterPro" id="IPR005517">
    <property type="entry name" value="Transl_elong_EFG/EF2_IV"/>
</dbReference>
<dbReference type="NCBIfam" id="TIGR00484">
    <property type="entry name" value="EF-G"/>
    <property type="match status" value="1"/>
</dbReference>
<dbReference type="NCBIfam" id="NF009379">
    <property type="entry name" value="PRK12740.1-3"/>
    <property type="match status" value="1"/>
</dbReference>
<dbReference type="NCBIfam" id="NF009381">
    <property type="entry name" value="PRK12740.1-5"/>
    <property type="match status" value="1"/>
</dbReference>
<dbReference type="NCBIfam" id="TIGR00231">
    <property type="entry name" value="small_GTP"/>
    <property type="match status" value="1"/>
</dbReference>
<dbReference type="PANTHER" id="PTHR43261:SF1">
    <property type="entry name" value="RIBOSOME-RELEASING FACTOR 2, MITOCHONDRIAL"/>
    <property type="match status" value="1"/>
</dbReference>
<dbReference type="PANTHER" id="PTHR43261">
    <property type="entry name" value="TRANSLATION ELONGATION FACTOR G-RELATED"/>
    <property type="match status" value="1"/>
</dbReference>
<dbReference type="Pfam" id="PF00679">
    <property type="entry name" value="EFG_C"/>
    <property type="match status" value="1"/>
</dbReference>
<dbReference type="Pfam" id="PF14492">
    <property type="entry name" value="EFG_III"/>
    <property type="match status" value="1"/>
</dbReference>
<dbReference type="Pfam" id="PF03764">
    <property type="entry name" value="EFG_IV"/>
    <property type="match status" value="1"/>
</dbReference>
<dbReference type="Pfam" id="PF00009">
    <property type="entry name" value="GTP_EFTU"/>
    <property type="match status" value="1"/>
</dbReference>
<dbReference type="Pfam" id="PF03144">
    <property type="entry name" value="GTP_EFTU_D2"/>
    <property type="match status" value="1"/>
</dbReference>
<dbReference type="PRINTS" id="PR00315">
    <property type="entry name" value="ELONGATNFCT"/>
</dbReference>
<dbReference type="SMART" id="SM00838">
    <property type="entry name" value="EFG_C"/>
    <property type="match status" value="1"/>
</dbReference>
<dbReference type="SMART" id="SM00889">
    <property type="entry name" value="EFG_IV"/>
    <property type="match status" value="1"/>
</dbReference>
<dbReference type="SUPFAM" id="SSF54980">
    <property type="entry name" value="EF-G C-terminal domain-like"/>
    <property type="match status" value="2"/>
</dbReference>
<dbReference type="SUPFAM" id="SSF52540">
    <property type="entry name" value="P-loop containing nucleoside triphosphate hydrolases"/>
    <property type="match status" value="1"/>
</dbReference>
<dbReference type="SUPFAM" id="SSF54211">
    <property type="entry name" value="Ribosomal protein S5 domain 2-like"/>
    <property type="match status" value="1"/>
</dbReference>
<dbReference type="SUPFAM" id="SSF50447">
    <property type="entry name" value="Translation proteins"/>
    <property type="match status" value="1"/>
</dbReference>
<dbReference type="PROSITE" id="PS00301">
    <property type="entry name" value="G_TR_1"/>
    <property type="match status" value="1"/>
</dbReference>
<dbReference type="PROSITE" id="PS51722">
    <property type="entry name" value="G_TR_2"/>
    <property type="match status" value="1"/>
</dbReference>
<proteinExistence type="inferred from homology"/>
<gene>
    <name evidence="1" type="primary">fusA</name>
    <name type="ordered locus">Syncc9902_2021</name>
</gene>
<protein>
    <recommendedName>
        <fullName evidence="1">Elongation factor G</fullName>
        <shortName evidence="1">EF-G</shortName>
    </recommendedName>
</protein>
<sequence>MARAFPLERVRNIGIAAHIDAGKTTTTERILFYSGVVHKIGEVHDGAAVTDWMAQERERGITITAAAISTSWKDHRVNIIDTPGHVDFTIEVERSMRVLDGVIAVFCAVGGVQPQSETVWRQADRYSVPRMVFVNKMDRTGADFLKVHGQIQDRLKANAVPIQLPIGAEGELSGIIDLVENKAHIYKDDLGQDIEITDVPEAMKDQVEEWRAFLMEKVAETDEALIEKFLDTGELSNDELKQGIRTGVVKHGLVPVLCGSAFKNKGVQLVLDAVVDYLPAPIDVPPIQGILPDGTEAVRPSDDKAPFSALAFKVMADPYGKLTFVRMYSGVLEKGSYVMNSTKGIKERISRLVVLKADDREEVDQLQAGDLGAVLGLKNTTTGDTLCSADEPIVLETLFVPEPVISVAVEPKTKGDMEKLSKALVSLAEEDPTFRVRTDQETGQTVIAGMGELHLEILVDRMMREFKVEANIGAPQVSYRETIRGSSKGEGKFSRQTGGKGQYGHVVIEMEPGEPESGFVFVNKIVGGIVPKEFIKPSEQGMKETCESGVIAGFPLIDVKVSMVDGSYHDVDSSEMAFKIAGSMAFKDAVRKCNPVLLEPMMKVEVEVPEDFLGSVIGDLSSRRGQVEGQAIDDGTSKVSAKVPLAEMFGYATELRSMTQGRGIFSMEFSHYEDVPRNVAEAIISKNQGNS</sequence>
<reference key="1">
    <citation type="submission" date="2005-08" db="EMBL/GenBank/DDBJ databases">
        <title>Complete sequence of Synechococcus sp. CC9902.</title>
        <authorList>
            <person name="Copeland A."/>
            <person name="Lucas S."/>
            <person name="Lapidus A."/>
            <person name="Barry K."/>
            <person name="Detter J.C."/>
            <person name="Glavina T."/>
            <person name="Hammon N."/>
            <person name="Israni S."/>
            <person name="Pitluck S."/>
            <person name="Martinez M."/>
            <person name="Schmutz J."/>
            <person name="Larimer F."/>
            <person name="Land M."/>
            <person name="Kyrpides N."/>
            <person name="Ivanova N."/>
            <person name="Richardson P."/>
        </authorList>
    </citation>
    <scope>NUCLEOTIDE SEQUENCE [LARGE SCALE GENOMIC DNA]</scope>
    <source>
        <strain>CC9902</strain>
    </source>
</reference>